<feature type="chain" id="PRO_0000329512" description="Polyribonucleotide nucleotidyltransferase">
    <location>
        <begin position="1"/>
        <end position="712"/>
    </location>
</feature>
<feature type="domain" description="KH" evidence="1">
    <location>
        <begin position="554"/>
        <end position="613"/>
    </location>
</feature>
<feature type="domain" description="S1 motif" evidence="1">
    <location>
        <begin position="623"/>
        <end position="691"/>
    </location>
</feature>
<feature type="binding site" evidence="1">
    <location>
        <position position="487"/>
    </location>
    <ligand>
        <name>Mg(2+)</name>
        <dbReference type="ChEBI" id="CHEBI:18420"/>
    </ligand>
</feature>
<feature type="binding site" evidence="1">
    <location>
        <position position="493"/>
    </location>
    <ligand>
        <name>Mg(2+)</name>
        <dbReference type="ChEBI" id="CHEBI:18420"/>
    </ligand>
</feature>
<dbReference type="EC" id="2.7.7.8" evidence="1"/>
<dbReference type="EMBL" id="AE017194">
    <property type="protein sequence ID" value="AAS42750.1"/>
    <property type="molecule type" value="Genomic_DNA"/>
</dbReference>
<dbReference type="SMR" id="Q732R5"/>
<dbReference type="KEGG" id="bca:BCE_3845"/>
<dbReference type="HOGENOM" id="CLU_004217_2_2_9"/>
<dbReference type="Proteomes" id="UP000002527">
    <property type="component" value="Chromosome"/>
</dbReference>
<dbReference type="GO" id="GO:0005829">
    <property type="term" value="C:cytosol"/>
    <property type="evidence" value="ECO:0007669"/>
    <property type="project" value="TreeGrafter"/>
</dbReference>
<dbReference type="GO" id="GO:0000175">
    <property type="term" value="F:3'-5'-RNA exonuclease activity"/>
    <property type="evidence" value="ECO:0007669"/>
    <property type="project" value="TreeGrafter"/>
</dbReference>
<dbReference type="GO" id="GO:0000287">
    <property type="term" value="F:magnesium ion binding"/>
    <property type="evidence" value="ECO:0007669"/>
    <property type="project" value="UniProtKB-UniRule"/>
</dbReference>
<dbReference type="GO" id="GO:0004654">
    <property type="term" value="F:polyribonucleotide nucleotidyltransferase activity"/>
    <property type="evidence" value="ECO:0007669"/>
    <property type="project" value="UniProtKB-UniRule"/>
</dbReference>
<dbReference type="GO" id="GO:0003723">
    <property type="term" value="F:RNA binding"/>
    <property type="evidence" value="ECO:0007669"/>
    <property type="project" value="UniProtKB-UniRule"/>
</dbReference>
<dbReference type="GO" id="GO:0006402">
    <property type="term" value="P:mRNA catabolic process"/>
    <property type="evidence" value="ECO:0007669"/>
    <property type="project" value="UniProtKB-UniRule"/>
</dbReference>
<dbReference type="GO" id="GO:0006396">
    <property type="term" value="P:RNA processing"/>
    <property type="evidence" value="ECO:0007669"/>
    <property type="project" value="InterPro"/>
</dbReference>
<dbReference type="CDD" id="cd02393">
    <property type="entry name" value="KH-I_PNPase"/>
    <property type="match status" value="1"/>
</dbReference>
<dbReference type="CDD" id="cd11363">
    <property type="entry name" value="RNase_PH_PNPase_1"/>
    <property type="match status" value="1"/>
</dbReference>
<dbReference type="CDD" id="cd11364">
    <property type="entry name" value="RNase_PH_PNPase_2"/>
    <property type="match status" value="1"/>
</dbReference>
<dbReference type="CDD" id="cd04472">
    <property type="entry name" value="S1_PNPase"/>
    <property type="match status" value="1"/>
</dbReference>
<dbReference type="FunFam" id="2.40.50.140:FF:000023">
    <property type="entry name" value="Polyribonucleotide nucleotidyltransferase"/>
    <property type="match status" value="1"/>
</dbReference>
<dbReference type="FunFam" id="3.30.1370.10:FF:000001">
    <property type="entry name" value="Polyribonucleotide nucleotidyltransferase"/>
    <property type="match status" value="1"/>
</dbReference>
<dbReference type="FunFam" id="3.30.230.70:FF:000001">
    <property type="entry name" value="Polyribonucleotide nucleotidyltransferase"/>
    <property type="match status" value="1"/>
</dbReference>
<dbReference type="FunFam" id="3.30.230.70:FF:000002">
    <property type="entry name" value="Polyribonucleotide nucleotidyltransferase"/>
    <property type="match status" value="1"/>
</dbReference>
<dbReference type="Gene3D" id="3.30.230.70">
    <property type="entry name" value="GHMP Kinase, N-terminal domain"/>
    <property type="match status" value="2"/>
</dbReference>
<dbReference type="Gene3D" id="3.30.1370.10">
    <property type="entry name" value="K Homology domain, type 1"/>
    <property type="match status" value="1"/>
</dbReference>
<dbReference type="Gene3D" id="2.40.50.140">
    <property type="entry name" value="Nucleic acid-binding proteins"/>
    <property type="match status" value="1"/>
</dbReference>
<dbReference type="HAMAP" id="MF_01595">
    <property type="entry name" value="PNPase"/>
    <property type="match status" value="1"/>
</dbReference>
<dbReference type="InterPro" id="IPR001247">
    <property type="entry name" value="ExoRNase_PH_dom1"/>
</dbReference>
<dbReference type="InterPro" id="IPR015847">
    <property type="entry name" value="ExoRNase_PH_dom2"/>
</dbReference>
<dbReference type="InterPro" id="IPR036345">
    <property type="entry name" value="ExoRNase_PH_dom2_sf"/>
</dbReference>
<dbReference type="InterPro" id="IPR004087">
    <property type="entry name" value="KH_dom"/>
</dbReference>
<dbReference type="InterPro" id="IPR004088">
    <property type="entry name" value="KH_dom_type_1"/>
</dbReference>
<dbReference type="InterPro" id="IPR036612">
    <property type="entry name" value="KH_dom_type_1_sf"/>
</dbReference>
<dbReference type="InterPro" id="IPR012340">
    <property type="entry name" value="NA-bd_OB-fold"/>
</dbReference>
<dbReference type="InterPro" id="IPR012162">
    <property type="entry name" value="PNPase"/>
</dbReference>
<dbReference type="InterPro" id="IPR027408">
    <property type="entry name" value="PNPase/RNase_PH_dom_sf"/>
</dbReference>
<dbReference type="InterPro" id="IPR015848">
    <property type="entry name" value="PNPase_PH_RNA-bd_bac/org-type"/>
</dbReference>
<dbReference type="InterPro" id="IPR020568">
    <property type="entry name" value="Ribosomal_Su5_D2-typ_SF"/>
</dbReference>
<dbReference type="InterPro" id="IPR003029">
    <property type="entry name" value="S1_domain"/>
</dbReference>
<dbReference type="NCBIfam" id="TIGR03591">
    <property type="entry name" value="polynuc_phos"/>
    <property type="match status" value="1"/>
</dbReference>
<dbReference type="NCBIfam" id="NF008805">
    <property type="entry name" value="PRK11824.1"/>
    <property type="match status" value="1"/>
</dbReference>
<dbReference type="PANTHER" id="PTHR11252">
    <property type="entry name" value="POLYRIBONUCLEOTIDE NUCLEOTIDYLTRANSFERASE"/>
    <property type="match status" value="1"/>
</dbReference>
<dbReference type="PANTHER" id="PTHR11252:SF0">
    <property type="entry name" value="POLYRIBONUCLEOTIDE NUCLEOTIDYLTRANSFERASE 1, MITOCHONDRIAL"/>
    <property type="match status" value="1"/>
</dbReference>
<dbReference type="Pfam" id="PF00013">
    <property type="entry name" value="KH_1"/>
    <property type="match status" value="1"/>
</dbReference>
<dbReference type="Pfam" id="PF03726">
    <property type="entry name" value="PNPase"/>
    <property type="match status" value="1"/>
</dbReference>
<dbReference type="Pfam" id="PF01138">
    <property type="entry name" value="RNase_PH"/>
    <property type="match status" value="2"/>
</dbReference>
<dbReference type="Pfam" id="PF03725">
    <property type="entry name" value="RNase_PH_C"/>
    <property type="match status" value="2"/>
</dbReference>
<dbReference type="Pfam" id="PF00575">
    <property type="entry name" value="S1"/>
    <property type="match status" value="1"/>
</dbReference>
<dbReference type="PIRSF" id="PIRSF005499">
    <property type="entry name" value="PNPase"/>
    <property type="match status" value="1"/>
</dbReference>
<dbReference type="SMART" id="SM00322">
    <property type="entry name" value="KH"/>
    <property type="match status" value="1"/>
</dbReference>
<dbReference type="SMART" id="SM00316">
    <property type="entry name" value="S1"/>
    <property type="match status" value="1"/>
</dbReference>
<dbReference type="SUPFAM" id="SSF54791">
    <property type="entry name" value="Eukaryotic type KH-domain (KH-domain type I)"/>
    <property type="match status" value="1"/>
</dbReference>
<dbReference type="SUPFAM" id="SSF50249">
    <property type="entry name" value="Nucleic acid-binding proteins"/>
    <property type="match status" value="1"/>
</dbReference>
<dbReference type="SUPFAM" id="SSF55666">
    <property type="entry name" value="Ribonuclease PH domain 2-like"/>
    <property type="match status" value="2"/>
</dbReference>
<dbReference type="SUPFAM" id="SSF54211">
    <property type="entry name" value="Ribosomal protein S5 domain 2-like"/>
    <property type="match status" value="2"/>
</dbReference>
<dbReference type="PROSITE" id="PS50084">
    <property type="entry name" value="KH_TYPE_1"/>
    <property type="match status" value="1"/>
</dbReference>
<dbReference type="PROSITE" id="PS50126">
    <property type="entry name" value="S1"/>
    <property type="match status" value="1"/>
</dbReference>
<gene>
    <name evidence="1" type="primary">pnp</name>
    <name type="ordered locus">BCE_3845</name>
</gene>
<accession>Q732R5</accession>
<name>PNP_BACC1</name>
<organism>
    <name type="scientific">Bacillus cereus (strain ATCC 10987 / NRS 248)</name>
    <dbReference type="NCBI Taxonomy" id="222523"/>
    <lineage>
        <taxon>Bacteria</taxon>
        <taxon>Bacillati</taxon>
        <taxon>Bacillota</taxon>
        <taxon>Bacilli</taxon>
        <taxon>Bacillales</taxon>
        <taxon>Bacillaceae</taxon>
        <taxon>Bacillus</taxon>
        <taxon>Bacillus cereus group</taxon>
    </lineage>
</organism>
<keyword id="KW-0963">Cytoplasm</keyword>
<keyword id="KW-0460">Magnesium</keyword>
<keyword id="KW-0479">Metal-binding</keyword>
<keyword id="KW-0548">Nucleotidyltransferase</keyword>
<keyword id="KW-0694">RNA-binding</keyword>
<keyword id="KW-0808">Transferase</keyword>
<proteinExistence type="inferred from homology"/>
<evidence type="ECO:0000255" key="1">
    <source>
        <dbReference type="HAMAP-Rule" id="MF_01595"/>
    </source>
</evidence>
<sequence length="712" mass="78230">MSQEKQVFSIDLAGRQLTVETGQLAKQANGAVLVRYGDTAVLSTATASKEAKNVDFFPLTVNYEERLYAVGKIPGGFIKREGRPSEKAILASRLIDRPIRPLFADGFRNEVQVVSIVMSVDQDCSSEMAAMLGSSLALSISDIPFEGPIAGATVGRINGEFVINPTVEQQEQSDIHLVVAGTKDAINMVEAGADQVPEETMLEAIMFGHDEIKRLIAFQEEIVQAVGKEKSEVKLYEVDADLNQSVREMAEKDMHSAIQVHEKHAREDAINEVKKRVIEHYEAQEADADTLGQVNEILYKIVKEEVRRLITVEKIRPDGRKGDEIRPLASEVGILSRTHGSGLFTRGQTQALSICTLGALGDVQILDGLGVEESKRFMHHYNFPSFSVGETRPMRGPGRREIGHGALGERALEPVIPSEKDFPYTVRLVSEVLESNGSTSQASICGSTLAMMDAGVPLKAPVAGIAMGLVKSGEHYTILTDIQGMEDHLGDMDFKVAGTAHGVTALQMDIKIDGLSREILEEALQQAKVGRMHILDHMLSVIAEPRTELSAYAPKIITMTINPDKIRDVIGPSGKQINKIIEETGVKIDIEQDGTVFISSINQEMNDKAKKIIEDIVREVQVGEIYEGKVKRVEKFGAFVELFSGKDGLVHISELALERVGKVEDVVKIGDVITVKVIEIDKQGRVNLSRKVLLKEEQEKEAAKEENKQEQQ</sequence>
<reference key="1">
    <citation type="journal article" date="2004" name="Nucleic Acids Res.">
        <title>The genome sequence of Bacillus cereus ATCC 10987 reveals metabolic adaptations and a large plasmid related to Bacillus anthracis pXO1.</title>
        <authorList>
            <person name="Rasko D.A."/>
            <person name="Ravel J."/>
            <person name="Oekstad O.A."/>
            <person name="Helgason E."/>
            <person name="Cer R.Z."/>
            <person name="Jiang L."/>
            <person name="Shores K.A."/>
            <person name="Fouts D.E."/>
            <person name="Tourasse N.J."/>
            <person name="Angiuoli S.V."/>
            <person name="Kolonay J.F."/>
            <person name="Nelson W.C."/>
            <person name="Kolstoe A.-B."/>
            <person name="Fraser C.M."/>
            <person name="Read T.D."/>
        </authorList>
    </citation>
    <scope>NUCLEOTIDE SEQUENCE [LARGE SCALE GENOMIC DNA]</scope>
    <source>
        <strain>ATCC 10987 / NRS 248</strain>
    </source>
</reference>
<comment type="function">
    <text evidence="1">Involved in mRNA degradation. Catalyzes the phosphorolysis of single-stranded polyribonucleotides processively in the 3'- to 5'-direction.</text>
</comment>
<comment type="catalytic activity">
    <reaction evidence="1">
        <text>RNA(n+1) + phosphate = RNA(n) + a ribonucleoside 5'-diphosphate</text>
        <dbReference type="Rhea" id="RHEA:22096"/>
        <dbReference type="Rhea" id="RHEA-COMP:14527"/>
        <dbReference type="Rhea" id="RHEA-COMP:17342"/>
        <dbReference type="ChEBI" id="CHEBI:43474"/>
        <dbReference type="ChEBI" id="CHEBI:57930"/>
        <dbReference type="ChEBI" id="CHEBI:140395"/>
        <dbReference type="EC" id="2.7.7.8"/>
    </reaction>
</comment>
<comment type="cofactor">
    <cofactor evidence="1">
        <name>Mg(2+)</name>
        <dbReference type="ChEBI" id="CHEBI:18420"/>
    </cofactor>
</comment>
<comment type="subcellular location">
    <subcellularLocation>
        <location evidence="1">Cytoplasm</location>
    </subcellularLocation>
</comment>
<comment type="similarity">
    <text evidence="1">Belongs to the polyribonucleotide nucleotidyltransferase family.</text>
</comment>
<protein>
    <recommendedName>
        <fullName evidence="1">Polyribonucleotide nucleotidyltransferase</fullName>
        <ecNumber evidence="1">2.7.7.8</ecNumber>
    </recommendedName>
    <alternativeName>
        <fullName evidence="1">Polynucleotide phosphorylase</fullName>
        <shortName evidence="1">PNPase</shortName>
    </alternativeName>
</protein>